<sequence length="130" mass="14725">MAENQNYGTGRRKSSSARVFIKPGSGKIVINQRELDVYFGRETSRMIVRQPLELVELTDKLDLYVTVKGGGISGQAGAIRHGITRALIEYDETLRPALRAAGFVTRDARRVERKKIGLHKARRRPQYSKR</sequence>
<gene>
    <name evidence="1" type="primary">rpsI</name>
    <name type="ordered locus">HS_0753</name>
</gene>
<accession>Q0I2N2</accession>
<proteinExistence type="inferred from homology"/>
<dbReference type="EMBL" id="CP000436">
    <property type="protein sequence ID" value="ABI25028.1"/>
    <property type="molecule type" value="Genomic_DNA"/>
</dbReference>
<dbReference type="SMR" id="Q0I2N2"/>
<dbReference type="KEGG" id="hso:HS_0753"/>
<dbReference type="eggNOG" id="COG0103">
    <property type="taxonomic scope" value="Bacteria"/>
</dbReference>
<dbReference type="HOGENOM" id="CLU_046483_2_1_6"/>
<dbReference type="GO" id="GO:0022627">
    <property type="term" value="C:cytosolic small ribosomal subunit"/>
    <property type="evidence" value="ECO:0007669"/>
    <property type="project" value="TreeGrafter"/>
</dbReference>
<dbReference type="GO" id="GO:0003723">
    <property type="term" value="F:RNA binding"/>
    <property type="evidence" value="ECO:0007669"/>
    <property type="project" value="TreeGrafter"/>
</dbReference>
<dbReference type="GO" id="GO:0003735">
    <property type="term" value="F:structural constituent of ribosome"/>
    <property type="evidence" value="ECO:0007669"/>
    <property type="project" value="InterPro"/>
</dbReference>
<dbReference type="GO" id="GO:0006412">
    <property type="term" value="P:translation"/>
    <property type="evidence" value="ECO:0007669"/>
    <property type="project" value="UniProtKB-UniRule"/>
</dbReference>
<dbReference type="FunFam" id="3.30.230.10:FF:000001">
    <property type="entry name" value="30S ribosomal protein S9"/>
    <property type="match status" value="1"/>
</dbReference>
<dbReference type="Gene3D" id="3.30.230.10">
    <property type="match status" value="1"/>
</dbReference>
<dbReference type="HAMAP" id="MF_00532_B">
    <property type="entry name" value="Ribosomal_uS9_B"/>
    <property type="match status" value="1"/>
</dbReference>
<dbReference type="InterPro" id="IPR020568">
    <property type="entry name" value="Ribosomal_Su5_D2-typ_SF"/>
</dbReference>
<dbReference type="InterPro" id="IPR000754">
    <property type="entry name" value="Ribosomal_uS9"/>
</dbReference>
<dbReference type="InterPro" id="IPR023035">
    <property type="entry name" value="Ribosomal_uS9_bac/plastid"/>
</dbReference>
<dbReference type="InterPro" id="IPR020574">
    <property type="entry name" value="Ribosomal_uS9_CS"/>
</dbReference>
<dbReference type="InterPro" id="IPR014721">
    <property type="entry name" value="Ribsml_uS5_D2-typ_fold_subgr"/>
</dbReference>
<dbReference type="NCBIfam" id="NF001099">
    <property type="entry name" value="PRK00132.1"/>
    <property type="match status" value="1"/>
</dbReference>
<dbReference type="PANTHER" id="PTHR21569">
    <property type="entry name" value="RIBOSOMAL PROTEIN S9"/>
    <property type="match status" value="1"/>
</dbReference>
<dbReference type="PANTHER" id="PTHR21569:SF1">
    <property type="entry name" value="SMALL RIBOSOMAL SUBUNIT PROTEIN US9M"/>
    <property type="match status" value="1"/>
</dbReference>
<dbReference type="Pfam" id="PF00380">
    <property type="entry name" value="Ribosomal_S9"/>
    <property type="match status" value="1"/>
</dbReference>
<dbReference type="SUPFAM" id="SSF54211">
    <property type="entry name" value="Ribosomal protein S5 domain 2-like"/>
    <property type="match status" value="1"/>
</dbReference>
<dbReference type="PROSITE" id="PS00360">
    <property type="entry name" value="RIBOSOMAL_S9"/>
    <property type="match status" value="1"/>
</dbReference>
<reference key="1">
    <citation type="journal article" date="2007" name="J. Bacteriol.">
        <title>Complete genome sequence of Haemophilus somnus (Histophilus somni) strain 129Pt and comparison to Haemophilus ducreyi 35000HP and Haemophilus influenzae Rd.</title>
        <authorList>
            <person name="Challacombe J.F."/>
            <person name="Duncan A.J."/>
            <person name="Brettin T.S."/>
            <person name="Bruce D."/>
            <person name="Chertkov O."/>
            <person name="Detter J.C."/>
            <person name="Han C.S."/>
            <person name="Misra M."/>
            <person name="Richardson P."/>
            <person name="Tapia R."/>
            <person name="Thayer N."/>
            <person name="Xie G."/>
            <person name="Inzana T.J."/>
        </authorList>
    </citation>
    <scope>NUCLEOTIDE SEQUENCE [LARGE SCALE GENOMIC DNA]</scope>
    <source>
        <strain>129Pt</strain>
    </source>
</reference>
<keyword id="KW-0687">Ribonucleoprotein</keyword>
<keyword id="KW-0689">Ribosomal protein</keyword>
<organism>
    <name type="scientific">Histophilus somni (strain 129Pt)</name>
    <name type="common">Haemophilus somnus</name>
    <dbReference type="NCBI Taxonomy" id="205914"/>
    <lineage>
        <taxon>Bacteria</taxon>
        <taxon>Pseudomonadati</taxon>
        <taxon>Pseudomonadota</taxon>
        <taxon>Gammaproteobacteria</taxon>
        <taxon>Pasteurellales</taxon>
        <taxon>Pasteurellaceae</taxon>
        <taxon>Histophilus</taxon>
    </lineage>
</organism>
<name>RS9_HISS1</name>
<protein>
    <recommendedName>
        <fullName evidence="1">Small ribosomal subunit protein uS9</fullName>
    </recommendedName>
    <alternativeName>
        <fullName evidence="2">30S ribosomal protein S9</fullName>
    </alternativeName>
</protein>
<comment type="similarity">
    <text evidence="1">Belongs to the universal ribosomal protein uS9 family.</text>
</comment>
<feature type="chain" id="PRO_1000051229" description="Small ribosomal subunit protein uS9">
    <location>
        <begin position="1"/>
        <end position="130"/>
    </location>
</feature>
<evidence type="ECO:0000255" key="1">
    <source>
        <dbReference type="HAMAP-Rule" id="MF_00532"/>
    </source>
</evidence>
<evidence type="ECO:0000305" key="2"/>